<proteinExistence type="inferred from homology"/>
<accession>Q0I1R5</accession>
<feature type="chain" id="PRO_1000045928" description="Nucleoid-associated protein HS_0228">
    <location>
        <begin position="1"/>
        <end position="337"/>
    </location>
</feature>
<sequence length="337" mass="38512">MSIIVNQIVLHQLVKTSQDENTVQLKTHLRDELLPITAETEQMMLQLHQEYHNKTKAYGVFQETSNFAQILNRTLENDIDFLAFSHQSAELLRQELGKYSFANDGTLILCQYNFLATDYLFIALLDSRYSMLVDENLEIKQTHYLDITQFDIACRINLTELHLDAKSTRYLTFIKGRVGRKIADFFMDFLGAEEGLNPQVQNQCLLQAVSDYCQQADLTKEQTQAVKKQVFDYCKGQINVGEEIVVRELSANIPTLNEQSFVDFAVSQNYGLEENIPPVRTALKSLTKFSGSGKGITLSFDAELLNSRIFWDEATDSLTITGLPPNLRDQLQRQTKE</sequence>
<evidence type="ECO:0000255" key="1">
    <source>
        <dbReference type="HAMAP-Rule" id="MF_00730"/>
    </source>
</evidence>
<dbReference type="EMBL" id="CP000436">
    <property type="protein sequence ID" value="ABI24506.1"/>
    <property type="molecule type" value="Genomic_DNA"/>
</dbReference>
<dbReference type="SMR" id="Q0I1R5"/>
<dbReference type="KEGG" id="hso:HS_0228"/>
<dbReference type="eggNOG" id="COG3081">
    <property type="taxonomic scope" value="Bacteria"/>
</dbReference>
<dbReference type="HOGENOM" id="CLU_063050_0_1_6"/>
<dbReference type="GO" id="GO:0043590">
    <property type="term" value="C:bacterial nucleoid"/>
    <property type="evidence" value="ECO:0007669"/>
    <property type="project" value="TreeGrafter"/>
</dbReference>
<dbReference type="GO" id="GO:0005737">
    <property type="term" value="C:cytoplasm"/>
    <property type="evidence" value="ECO:0007669"/>
    <property type="project" value="UniProtKB-UniRule"/>
</dbReference>
<dbReference type="GO" id="GO:0003690">
    <property type="term" value="F:double-stranded DNA binding"/>
    <property type="evidence" value="ECO:0007669"/>
    <property type="project" value="TreeGrafter"/>
</dbReference>
<dbReference type="GO" id="GO:0003727">
    <property type="term" value="F:single-stranded RNA binding"/>
    <property type="evidence" value="ECO:0007669"/>
    <property type="project" value="TreeGrafter"/>
</dbReference>
<dbReference type="HAMAP" id="MF_00730">
    <property type="entry name" value="NdpA"/>
    <property type="match status" value="1"/>
</dbReference>
<dbReference type="InterPro" id="IPR007358">
    <property type="entry name" value="Nucleoid_associated_NdpA"/>
</dbReference>
<dbReference type="NCBIfam" id="NF001557">
    <property type="entry name" value="PRK00378.1"/>
    <property type="match status" value="1"/>
</dbReference>
<dbReference type="PANTHER" id="PTHR38772">
    <property type="match status" value="1"/>
</dbReference>
<dbReference type="PANTHER" id="PTHR38772:SF1">
    <property type="entry name" value="NUCLEOID-ASSOCIATED PROTEIN YEJK"/>
    <property type="match status" value="1"/>
</dbReference>
<dbReference type="Pfam" id="PF04245">
    <property type="entry name" value="NA37"/>
    <property type="match status" value="1"/>
</dbReference>
<gene>
    <name type="ordered locus">HS_0228</name>
</gene>
<reference key="1">
    <citation type="journal article" date="2007" name="J. Bacteriol.">
        <title>Complete genome sequence of Haemophilus somnus (Histophilus somni) strain 129Pt and comparison to Haemophilus ducreyi 35000HP and Haemophilus influenzae Rd.</title>
        <authorList>
            <person name="Challacombe J.F."/>
            <person name="Duncan A.J."/>
            <person name="Brettin T.S."/>
            <person name="Bruce D."/>
            <person name="Chertkov O."/>
            <person name="Detter J.C."/>
            <person name="Han C.S."/>
            <person name="Misra M."/>
            <person name="Richardson P."/>
            <person name="Tapia R."/>
            <person name="Thayer N."/>
            <person name="Xie G."/>
            <person name="Inzana T.J."/>
        </authorList>
    </citation>
    <scope>NUCLEOTIDE SEQUENCE [LARGE SCALE GENOMIC DNA]</scope>
    <source>
        <strain>129Pt</strain>
    </source>
</reference>
<name>NDPA_HISS1</name>
<organism>
    <name type="scientific">Histophilus somni (strain 129Pt)</name>
    <name type="common">Haemophilus somnus</name>
    <dbReference type="NCBI Taxonomy" id="205914"/>
    <lineage>
        <taxon>Bacteria</taxon>
        <taxon>Pseudomonadati</taxon>
        <taxon>Pseudomonadota</taxon>
        <taxon>Gammaproteobacteria</taxon>
        <taxon>Pasteurellales</taxon>
        <taxon>Pasteurellaceae</taxon>
        <taxon>Histophilus</taxon>
    </lineage>
</organism>
<comment type="subcellular location">
    <subcellularLocation>
        <location evidence="1">Cytoplasm</location>
        <location evidence="1">Nucleoid</location>
    </subcellularLocation>
</comment>
<comment type="similarity">
    <text evidence="1">Belongs to the YejK family.</text>
</comment>
<keyword id="KW-0963">Cytoplasm</keyword>
<protein>
    <recommendedName>
        <fullName evidence="1">Nucleoid-associated protein HS_0228</fullName>
    </recommendedName>
</protein>